<comment type="function">
    <molecule>Capsid scaffolding protein</molecule>
    <text evidence="2">Acts as a scaffold protein by binding major capsid protein in the cytoplasm, inducing the nuclear localization of both proteins. Multimerizes in the nucleus such as major capsid protein forms the icosahedral T=16 capsid. Autocatalytic cleavage releases the assembly protein, and subsequently abolishes interaction with major capsid protein. Cleavages products are evicted from the capsid before or during DNA packaging.</text>
</comment>
<comment type="function">
    <molecule>Assemblin</molecule>
    <text evidence="2">Protease that plays an essential role in virion assembly within the nucleus. Catalyzes the cleavage of the assembly protein after formation of the spherical procapsid. By that cleavage, the capsid matures and gains its icosahedral shape. The cleavage sites seem to include -Ala-Ser-, -Ala-Ala-, as well as Ala-Thr bonds. Assemblin and cleavages products are evicted from the capsid before or during DNA packaging.</text>
</comment>
<comment type="function">
    <molecule>Assembly protein</molecule>
    <text evidence="2">Plays a major role in capsid assembly. Acts as a scaffold protein by binding major capsid protein. Multimerizes in the nucleus such as major capsid protein forms the icosahedral T=16 capsid. Cleaved by assemblin after capsid completion. The cleavages products are evicted from the capsid before or during DNA packaging.</text>
</comment>
<comment type="catalytic activity">
    <molecule>Assemblin</molecule>
    <reaction evidence="2">
        <text>Cleaves -Ala-|-Ser- and -Ala-|-Ala- bonds in the scaffold protein.</text>
        <dbReference type="EC" id="3.4.21.97"/>
    </reaction>
</comment>
<comment type="subunit">
    <molecule>Capsid scaffolding protein</molecule>
    <text evidence="2">Homomultimer. Interacts with major capsid protein.</text>
</comment>
<comment type="subunit">
    <molecule>Assemblin</molecule>
    <text evidence="2">Exists in a monomer-dimer equilibrium with the dimer being the active species.</text>
</comment>
<comment type="subunit">
    <molecule>Assembly protein</molecule>
    <text evidence="2">Homomultimer. Interacts with major capsid protein.</text>
</comment>
<comment type="subcellular location">
    <molecule>Capsid scaffolding protein</molecule>
    <subcellularLocation>
        <location evidence="2">Host cytoplasm</location>
    </subcellularLocation>
</comment>
<comment type="subcellular location">
    <molecule>Assemblin</molecule>
    <subcellularLocation>
        <location evidence="2">Host nucleus</location>
    </subcellularLocation>
</comment>
<comment type="subcellular location">
    <molecule>Assembly protein</molecule>
    <subcellularLocation>
        <location evidence="2">Host nucleus</location>
    </subcellularLocation>
</comment>
<comment type="alternative products">
    <event type="alternative promoter"/>
    <isoform>
        <id>P23984-1</id>
        <name>Capsid scaffolding protein</name>
        <name>pPR</name>
        <sequence type="displayed"/>
    </isoform>
    <isoform>
        <id>P23984-2</id>
        <name>pAP</name>
        <name>Assembly protein</name>
        <sequence type="described" ref="VSP_037421"/>
    </isoform>
</comment>
<comment type="domain">
    <text evidence="2">Region of interaction between pPR and pAP is called Amino conserved domain (ACD). The region of interaction with major capsid protein is called carboxyl conserved domain (CCD).</text>
</comment>
<comment type="PTM">
    <molecule>Capsid scaffolding protein</molecule>
    <text evidence="2">Capsid scaffolding protein is cleaved by assemblin after formation of the spherical procapsid. As a result, the capsid obtains its mature, icosahedral shape. Cleavages occur at two or more sites: release (R-site) and maturation (M-site).</text>
</comment>
<comment type="similarity">
    <text evidence="2">Belongs to the herpesviridae capsid scaffolding protein family.</text>
</comment>
<sequence>MSENVDIKYIFVAGYLVVYDHQESAGREYELTREQSKSALPVLPGTIPINIDHESSCVVGTVLTILDLPRGLFCLGVVSTALAPIFLSYVQDDALFANAEEGMVLTETEKFLYLLSNILPSLSLSSRRLEKNEVPGKDFFAHVALCELGRREGTVAIYGATASEAIGAFDDLSAPIKEQLYEIATREKCAEVPRELSRPEITRVLMKKFIHGAFLMDRGTCLKTRREMAAVYNPKYLQANEVITIGIKEHSEETPENAIKDRSVSTQTAPSFDISESQQPSGQTHVPAMESATCSGQFLQTKNGASPSASREDMVYVPFEKYASLLAASARRDNDRRPVSPSREFSRRSRDSTHECSPGRDIWPRGFERHPRLESFMGPGMNHTYRPALYEDPNFCGRFPYIPYQSPASTYPVHPNYYSSNFGQFPGAGTYPIQYPSLHEQTVVSRLDALISALEKNNKRDSEYSENNPRKRSARTISENDPYFPGEMVPAKKITTEQQLCEKKEPVGSGINDILQGILTLQKEVAGLKSASNADSSSERKEELENSNQESARETVDASMPKRLKDAQTKLKRKKEAAAFAQMMAD</sequence>
<dbReference type="EC" id="3.4.21.97" evidence="2"/>
<dbReference type="EMBL" id="D00565">
    <property type="protein sequence ID" value="BAA00439.1"/>
    <property type="molecule type" value="Genomic_DNA"/>
</dbReference>
<dbReference type="PIR" id="S13444">
    <property type="entry name" value="A43675"/>
</dbReference>
<dbReference type="RefSeq" id="YP_182355.1">
    <property type="nucleotide sequence ID" value="NC_006623.1"/>
</dbReference>
<dbReference type="SMR" id="P23984"/>
<dbReference type="MEROPS" id="S21.001"/>
<dbReference type="GeneID" id="3239022"/>
<dbReference type="KEGG" id="vg:3239022"/>
<dbReference type="GO" id="GO:0030430">
    <property type="term" value="C:host cell cytoplasm"/>
    <property type="evidence" value="ECO:0007669"/>
    <property type="project" value="UniProtKB-SubCell"/>
</dbReference>
<dbReference type="GO" id="GO:0042025">
    <property type="term" value="C:host cell nucleus"/>
    <property type="evidence" value="ECO:0007669"/>
    <property type="project" value="UniProtKB-SubCell"/>
</dbReference>
<dbReference type="GO" id="GO:0042802">
    <property type="term" value="F:identical protein binding"/>
    <property type="evidence" value="ECO:0007669"/>
    <property type="project" value="UniProtKB-UniRule"/>
</dbReference>
<dbReference type="GO" id="GO:0004252">
    <property type="term" value="F:serine-type endopeptidase activity"/>
    <property type="evidence" value="ECO:0007669"/>
    <property type="project" value="UniProtKB-UniRule"/>
</dbReference>
<dbReference type="GO" id="GO:0039708">
    <property type="term" value="P:nuclear capsid assembly"/>
    <property type="evidence" value="ECO:0007669"/>
    <property type="project" value="UniProtKB-ARBA"/>
</dbReference>
<dbReference type="GO" id="GO:0006508">
    <property type="term" value="P:proteolysis"/>
    <property type="evidence" value="ECO:0007669"/>
    <property type="project" value="UniProtKB-KW"/>
</dbReference>
<dbReference type="GO" id="GO:0019076">
    <property type="term" value="P:viral release from host cell"/>
    <property type="evidence" value="ECO:0007669"/>
    <property type="project" value="UniProtKB-UniRule"/>
</dbReference>
<dbReference type="Gene3D" id="3.20.16.10">
    <property type="entry name" value="Herpesvirus/Caudovirus protease domain"/>
    <property type="match status" value="1"/>
</dbReference>
<dbReference type="HAMAP" id="MF_04008">
    <property type="entry name" value="HSV_SCAF"/>
    <property type="match status" value="1"/>
</dbReference>
<dbReference type="InterPro" id="IPR035443">
    <property type="entry name" value="Herpes_virus_sf"/>
</dbReference>
<dbReference type="InterPro" id="IPR001847">
    <property type="entry name" value="Peptidase_S21"/>
</dbReference>
<dbReference type="Pfam" id="PF00716">
    <property type="entry name" value="Peptidase_S21"/>
    <property type="match status" value="1"/>
</dbReference>
<dbReference type="PRINTS" id="PR00236">
    <property type="entry name" value="HSVCAPSIDP40"/>
</dbReference>
<dbReference type="SUPFAM" id="SSF50789">
    <property type="entry name" value="Herpes virus serine proteinase, assemblin"/>
    <property type="match status" value="1"/>
</dbReference>
<name>SCAF_ILTVT</name>
<evidence type="ECO:0000250" key="1">
    <source>
        <dbReference type="UniProtKB" id="P16753"/>
    </source>
</evidence>
<evidence type="ECO:0000255" key="2">
    <source>
        <dbReference type="HAMAP-Rule" id="MF_04008"/>
    </source>
</evidence>
<evidence type="ECO:0000256" key="3">
    <source>
        <dbReference type="SAM" id="MobiDB-lite"/>
    </source>
</evidence>
<evidence type="ECO:0000305" key="4"/>
<proteinExistence type="inferred from homology"/>
<organismHost>
    <name type="scientific">Gallus gallus</name>
    <name type="common">Chicken</name>
    <dbReference type="NCBI Taxonomy" id="9031"/>
</organismHost>
<protein>
    <recommendedName>
        <fullName evidence="2">Capsid scaffolding protein</fullName>
    </recommendedName>
    <alternativeName>
        <fullName>Capsid protein P40</fullName>
    </alternativeName>
    <alternativeName>
        <fullName evidence="2">Protease precursor</fullName>
        <shortName evidence="2">pPR</shortName>
    </alternativeName>
    <component>
        <recommendedName>
            <fullName evidence="2">Assemblin</fullName>
            <ecNumber evidence="2">3.4.21.97</ecNumber>
        </recommendedName>
        <alternativeName>
            <fullName>Capsid protein VP24</fullName>
        </alternativeName>
        <alternativeName>
            <fullName evidence="2">Protease</fullName>
            <shortName evidence="2">Pr</shortName>
        </alternativeName>
    </component>
    <component>
        <recommendedName>
            <fullName evidence="2">Assembly protein</fullName>
            <shortName evidence="2">AP</shortName>
        </recommendedName>
        <alternativeName>
            <fullName evidence="2">Capsid assembly protein</fullName>
        </alternativeName>
        <alternativeName>
            <fullName>Capsid protein VP22A</fullName>
        </alternativeName>
    </component>
</protein>
<reference key="1">
    <citation type="journal article" date="1990" name="Nucleic Acids Res.">
        <title>The complete sequence of the capsid p40 gene from infectious laryngotracheitis virus.</title>
        <authorList>
            <person name="Griffin A.M."/>
        </authorList>
    </citation>
    <scope>NUCLEOTIDE SEQUENCE [GENOMIC DNA]</scope>
</reference>
<reference key="2">
    <citation type="journal article" date="1990" name="J. Gen. Virol.">
        <title>Analysis of the nucleotide sequence of DNA from the region of the thymidine kinase gene of infectious laryngotracheitis virus; potential evolutionary relationships between the herpesvirus subfamilies.</title>
        <authorList>
            <person name="Griffin A.M."/>
            <person name="Boursnell M.E."/>
        </authorList>
    </citation>
    <scope>NUCLEOTIDE SEQUENCE [GENOMIC DNA] OF 1-516</scope>
</reference>
<keyword id="KW-0877">Alternative promoter usage</keyword>
<keyword id="KW-1035">Host cytoplasm</keyword>
<keyword id="KW-1048">Host nucleus</keyword>
<keyword id="KW-0378">Hydrolase</keyword>
<keyword id="KW-0597">Phosphoprotein</keyword>
<keyword id="KW-0645">Protease</keyword>
<keyword id="KW-0720">Serine protease</keyword>
<keyword id="KW-0118">Viral capsid assembly</keyword>
<keyword id="KW-1188">Viral release from host cell</keyword>
<feature type="chain" id="PRO_0000376803" description="Capsid scaffolding protein">
    <location>
        <begin position="1"/>
        <end position="586"/>
    </location>
</feature>
<feature type="chain" id="PRO_0000027273" description="Assemblin" evidence="2">
    <location>
        <begin position="1"/>
        <end position="239"/>
    </location>
</feature>
<feature type="chain" id="PRO_0000027274" description="Assembly protein" evidence="2">
    <location>
        <begin position="240"/>
        <end position="586"/>
    </location>
</feature>
<feature type="region of interest" description="Disordered" evidence="3">
    <location>
        <begin position="251"/>
        <end position="288"/>
    </location>
</feature>
<feature type="region of interest" description="Interaction with pAP" evidence="2">
    <location>
        <begin position="312"/>
        <end position="331"/>
    </location>
</feature>
<feature type="region of interest" description="Disordered" evidence="3">
    <location>
        <begin position="330"/>
        <end position="364"/>
    </location>
</feature>
<feature type="region of interest" description="Disordered" evidence="3">
    <location>
        <begin position="458"/>
        <end position="486"/>
    </location>
</feature>
<feature type="region of interest" description="Disordered" evidence="3">
    <location>
        <begin position="530"/>
        <end position="586"/>
    </location>
</feature>
<feature type="region of interest" description="Interaction with major capsid protein" evidence="2">
    <location>
        <begin position="566"/>
        <end position="586"/>
    </location>
</feature>
<feature type="region of interest" description="Interaction with major capsid protein">
    <location>
        <begin position="567"/>
        <end position="586"/>
    </location>
</feature>
<feature type="compositionally biased region" description="Basic and acidic residues" evidence="3">
    <location>
        <begin position="251"/>
        <end position="263"/>
    </location>
</feature>
<feature type="compositionally biased region" description="Polar residues" evidence="3">
    <location>
        <begin position="264"/>
        <end position="284"/>
    </location>
</feature>
<feature type="active site" description="Charge relay system" evidence="2">
    <location>
        <position position="53"/>
    </location>
</feature>
<feature type="active site" description="Charge relay system" evidence="2">
    <location>
        <position position="123"/>
    </location>
</feature>
<feature type="active site" description="Charge relay system" evidence="2">
    <location>
        <position position="142"/>
    </location>
</feature>
<feature type="site" description="Cleavage; by assemblin; Release site" evidence="2">
    <location>
        <begin position="239"/>
        <end position="240"/>
    </location>
</feature>
<feature type="site" description="Cleavage; by assemblin; Maturation site" evidence="1">
    <location>
        <begin position="558"/>
        <end position="559"/>
    </location>
</feature>
<feature type="splice variant" id="VSP_037421" description="In isoform pAP." evidence="4">
    <location>
        <begin position="1"/>
        <end position="288"/>
    </location>
</feature>
<accession>P23984</accession>
<organism>
    <name type="scientific">Infectious laryngotracheitis virus (strain Thorne V882)</name>
    <name type="common">ILTV</name>
    <name type="synonym">Gallid herpesvirus 1</name>
    <dbReference type="NCBI Taxonomy" id="10344"/>
    <lineage>
        <taxon>Viruses</taxon>
        <taxon>Duplodnaviria</taxon>
        <taxon>Heunggongvirae</taxon>
        <taxon>Peploviricota</taxon>
        <taxon>Herviviricetes</taxon>
        <taxon>Herpesvirales</taxon>
        <taxon>Orthoherpesviridae</taxon>
        <taxon>Alphaherpesvirinae</taxon>
        <taxon>Iltovirus</taxon>
        <taxon>Iltovirus gallidalpha1</taxon>
        <taxon>Infectious laryngotracheitis virus</taxon>
    </lineage>
</organism>